<gene>
    <name type="primary">ctaE</name>
    <name type="synonym">coiII</name>
</gene>
<name>COX3_PARDE</name>
<comment type="catalytic activity">
    <reaction>
        <text>4 Fe(II)-[cytochrome c] + O2 + 8 H(+)(in) = 4 Fe(III)-[cytochrome c] + 2 H2O + 4 H(+)(out)</text>
        <dbReference type="Rhea" id="RHEA:11436"/>
        <dbReference type="Rhea" id="RHEA-COMP:10350"/>
        <dbReference type="Rhea" id="RHEA-COMP:14399"/>
        <dbReference type="ChEBI" id="CHEBI:15377"/>
        <dbReference type="ChEBI" id="CHEBI:15378"/>
        <dbReference type="ChEBI" id="CHEBI:15379"/>
        <dbReference type="ChEBI" id="CHEBI:29033"/>
        <dbReference type="ChEBI" id="CHEBI:29034"/>
        <dbReference type="EC" id="7.1.1.9"/>
    </reaction>
</comment>
<comment type="subcellular location">
    <subcellularLocation>
        <location>Cell inner membrane</location>
        <topology>Multi-pass membrane protein</topology>
    </subcellularLocation>
</comment>
<comment type="similarity">
    <text evidence="2">Belongs to the cytochrome c oxidase subunit 3 family.</text>
</comment>
<feature type="initiator methionine" description="Removed" evidence="1">
    <location>
        <position position="1"/>
    </location>
</feature>
<feature type="chain" id="PRO_0000183886" description="Cytochrome c oxidase subunit 3">
    <location>
        <begin position="2"/>
        <end position="274"/>
    </location>
</feature>
<feature type="topological domain" description="Cytoplasmic">
    <location>
        <begin position="2"/>
        <end position="15"/>
    </location>
</feature>
<feature type="transmembrane region" description="Helical">
    <location>
        <begin position="16"/>
        <end position="36"/>
    </location>
</feature>
<feature type="topological domain" description="Periplasmic">
    <location>
        <begin position="37"/>
        <end position="48"/>
    </location>
</feature>
<feature type="transmembrane region" description="Helical">
    <location>
        <begin position="49"/>
        <end position="77"/>
    </location>
</feature>
<feature type="topological domain" description="Cytoplasmic">
    <location>
        <begin position="78"/>
        <end position="79"/>
    </location>
</feature>
<feature type="transmembrane region" description="Helical">
    <location>
        <begin position="80"/>
        <end position="115"/>
    </location>
</feature>
<feature type="topological domain" description="Periplasmic">
    <location>
        <begin position="116"/>
        <end position="139"/>
    </location>
</feature>
<feature type="transmembrane region" description="Helical">
    <location>
        <begin position="140"/>
        <end position="166"/>
    </location>
</feature>
<feature type="topological domain" description="Cytoplasmic">
    <location>
        <begin position="167"/>
        <end position="168"/>
    </location>
</feature>
<feature type="transmembrane region" description="Helical">
    <location>
        <begin position="169"/>
        <end position="197"/>
    </location>
</feature>
<feature type="topological domain" description="Periplasmic">
    <location>
        <begin position="198"/>
        <end position="203"/>
    </location>
</feature>
<feature type="transmembrane region" description="Helical">
    <location>
        <begin position="204"/>
        <end position="237"/>
    </location>
</feature>
<feature type="topological domain" description="Cytoplasmic">
    <location>
        <begin position="238"/>
        <end position="244"/>
    </location>
</feature>
<feature type="transmembrane region" description="Helical">
    <location>
        <begin position="245"/>
        <end position="274"/>
    </location>
</feature>
<feature type="helix" evidence="4">
    <location>
        <begin position="17"/>
        <end position="36"/>
    </location>
</feature>
<feature type="strand" evidence="5">
    <location>
        <begin position="39"/>
        <end position="41"/>
    </location>
</feature>
<feature type="strand" evidence="4">
    <location>
        <begin position="42"/>
        <end position="44"/>
    </location>
</feature>
<feature type="helix" evidence="4">
    <location>
        <begin position="50"/>
        <end position="75"/>
    </location>
</feature>
<feature type="helix" evidence="4">
    <location>
        <begin position="81"/>
        <end position="114"/>
    </location>
</feature>
<feature type="turn" evidence="4">
    <location>
        <begin position="119"/>
        <end position="123"/>
    </location>
</feature>
<feature type="turn" evidence="5">
    <location>
        <begin position="138"/>
        <end position="140"/>
    </location>
</feature>
<feature type="helix" evidence="4">
    <location>
        <begin position="141"/>
        <end position="164"/>
    </location>
</feature>
<feature type="helix" evidence="4">
    <location>
        <begin position="169"/>
        <end position="195"/>
    </location>
</feature>
<feature type="strand" evidence="3">
    <location>
        <begin position="201"/>
        <end position="203"/>
    </location>
</feature>
<feature type="helix" evidence="4">
    <location>
        <begin position="205"/>
        <end position="237"/>
    </location>
</feature>
<feature type="helix" evidence="4">
    <location>
        <begin position="246"/>
        <end position="268"/>
    </location>
</feature>
<feature type="turn" evidence="4">
    <location>
        <begin position="269"/>
        <end position="273"/>
    </location>
</feature>
<proteinExistence type="evidence at protein level"/>
<sequence>MAHVKNHDYQILPPSIWPFFGAIGAFVMLTGAVAWMKGITFFGLPVEGPWMFLIGLVGVLYVMFGWWADVVNEGETGEHTPVVRIGLQYGFILFIMSEVMFFVAWFWAFIKNALYPMGPDSPIKDGVWPPEGIVTFDPWHLPLINTLILLLSGVAVTWAHHAFVLEGDRKTTINGLIVAVILGVCFTGLQAYEYSHAAFGLADTVYAGAFYMATGFHGAHVIIGTIFLFVCLIRLLKGQMTQKQHVGFEAAAWYWHFVDVVWLFLFVVIYIWGR</sequence>
<protein>
    <recommendedName>
        <fullName>Cytochrome c oxidase subunit 3</fullName>
        <ecNumber>7.1.1.9</ecNumber>
    </recommendedName>
    <alternativeName>
        <fullName>Cytochrome aa3 subunit 3</fullName>
    </alternativeName>
    <alternativeName>
        <fullName>Cytochrome c oxidase polypeptide III</fullName>
    </alternativeName>
    <alternativeName>
        <fullName>Oxidase aa(3) subunit 3</fullName>
    </alternativeName>
</protein>
<dbReference type="EC" id="7.1.1.9"/>
<dbReference type="EMBL" id="X04406">
    <property type="protein sequence ID" value="CAA27995.1"/>
    <property type="molecule type" value="Genomic_DNA"/>
</dbReference>
<dbReference type="EMBL" id="X05828">
    <property type="protein sequence ID" value="CAA29272.1"/>
    <property type="molecule type" value="Genomic_DNA"/>
</dbReference>
<dbReference type="PIR" id="S03807">
    <property type="entry name" value="S03807"/>
</dbReference>
<dbReference type="PDB" id="1QLE">
    <property type="method" value="X-ray"/>
    <property type="resolution" value="3.00 A"/>
    <property type="chains" value="C=2-274"/>
</dbReference>
<dbReference type="PDB" id="7ATE">
    <property type="method" value="EM"/>
    <property type="resolution" value="2.40 A"/>
    <property type="chains" value="C=1-274"/>
</dbReference>
<dbReference type="PDB" id="7ATN">
    <property type="method" value="EM"/>
    <property type="resolution" value="2.66 A"/>
    <property type="chains" value="C=1-274"/>
</dbReference>
<dbReference type="PDB" id="7AU3">
    <property type="method" value="EM"/>
    <property type="resolution" value="2.56 A"/>
    <property type="chains" value="C=1-274"/>
</dbReference>
<dbReference type="PDB" id="7AU6">
    <property type="method" value="EM"/>
    <property type="resolution" value="2.40 A"/>
    <property type="chains" value="C=1-274"/>
</dbReference>
<dbReference type="PDBsum" id="1QLE"/>
<dbReference type="PDBsum" id="7ATE"/>
<dbReference type="PDBsum" id="7ATN"/>
<dbReference type="PDBsum" id="7AU3"/>
<dbReference type="PDBsum" id="7AU6"/>
<dbReference type="EMDB" id="EMD-11921"/>
<dbReference type="EMDB" id="EMD-11922"/>
<dbReference type="EMDB" id="EMD-11924"/>
<dbReference type="EMDB" id="EMD-11925"/>
<dbReference type="SMR" id="P06030"/>
<dbReference type="EvolutionaryTrace" id="P06030"/>
<dbReference type="GO" id="GO:0005886">
    <property type="term" value="C:plasma membrane"/>
    <property type="evidence" value="ECO:0007669"/>
    <property type="project" value="UniProtKB-SubCell"/>
</dbReference>
<dbReference type="GO" id="GO:0004129">
    <property type="term" value="F:cytochrome-c oxidase activity"/>
    <property type="evidence" value="ECO:0007669"/>
    <property type="project" value="UniProtKB-EC"/>
</dbReference>
<dbReference type="GO" id="GO:0019646">
    <property type="term" value="P:aerobic electron transport chain"/>
    <property type="evidence" value="ECO:0007669"/>
    <property type="project" value="InterPro"/>
</dbReference>
<dbReference type="CDD" id="cd01665">
    <property type="entry name" value="Cyt_c_Oxidase_III"/>
    <property type="match status" value="1"/>
</dbReference>
<dbReference type="FunFam" id="1.20.120.80:FF:000002">
    <property type="entry name" value="Cytochrome c oxidase subunit 3"/>
    <property type="match status" value="1"/>
</dbReference>
<dbReference type="Gene3D" id="1.10.287.70">
    <property type="match status" value="1"/>
</dbReference>
<dbReference type="Gene3D" id="1.20.120.80">
    <property type="entry name" value="Cytochrome c oxidase, subunit III, four-helix bundle"/>
    <property type="match status" value="1"/>
</dbReference>
<dbReference type="InterPro" id="IPR024791">
    <property type="entry name" value="Cyt_c/ubiquinol_Oxase_su3"/>
</dbReference>
<dbReference type="InterPro" id="IPR033945">
    <property type="entry name" value="Cyt_c_oxase_su3_dom"/>
</dbReference>
<dbReference type="InterPro" id="IPR000298">
    <property type="entry name" value="Cyt_c_oxidase-like_su3"/>
</dbReference>
<dbReference type="InterPro" id="IPR035973">
    <property type="entry name" value="Cyt_c_oxidase_su3-like_sf"/>
</dbReference>
<dbReference type="InterPro" id="IPR013833">
    <property type="entry name" value="Cyt_c_oxidase_su3_a-hlx"/>
</dbReference>
<dbReference type="PANTHER" id="PTHR11403:SF7">
    <property type="entry name" value="CYTOCHROME C OXIDASE SUBUNIT 3"/>
    <property type="match status" value="1"/>
</dbReference>
<dbReference type="PANTHER" id="PTHR11403">
    <property type="entry name" value="CYTOCHROME C OXIDASE SUBUNIT III"/>
    <property type="match status" value="1"/>
</dbReference>
<dbReference type="Pfam" id="PF00510">
    <property type="entry name" value="COX3"/>
    <property type="match status" value="1"/>
</dbReference>
<dbReference type="SUPFAM" id="SSF81452">
    <property type="entry name" value="Cytochrome c oxidase subunit III-like"/>
    <property type="match status" value="1"/>
</dbReference>
<dbReference type="PROSITE" id="PS50253">
    <property type="entry name" value="COX3"/>
    <property type="match status" value="1"/>
</dbReference>
<keyword id="KW-0002">3D-structure</keyword>
<keyword id="KW-0997">Cell inner membrane</keyword>
<keyword id="KW-1003">Cell membrane</keyword>
<keyword id="KW-0903">Direct protein sequencing</keyword>
<keyword id="KW-0472">Membrane</keyword>
<keyword id="KW-1278">Translocase</keyword>
<keyword id="KW-0812">Transmembrane</keyword>
<keyword id="KW-1133">Transmembrane helix</keyword>
<reference key="1">
    <citation type="journal article" date="1987" name="EMBO J.">
        <title>Isolation and analysis of the genes for cytochrome c oxidase in Paracoccus denitrificans.</title>
        <authorList>
            <person name="Raitio M."/>
            <person name="Jalli T."/>
            <person name="Saraste M."/>
        </authorList>
    </citation>
    <scope>NUCLEOTIDE SEQUENCE [GENOMIC DNA]</scope>
    <source>
        <strain>S1657</strain>
    </source>
</reference>
<reference key="2">
    <citation type="journal article" date="1986" name="FEBS Lett.">
        <title>A gene in Paracoccus for subunit III of cytochrome oxidase.</title>
        <authorList>
            <person name="Saraste M."/>
            <person name="Raitio M."/>
            <person name="Jalli T."/>
            <person name="Peraemaa A."/>
        </authorList>
    </citation>
    <scope>NUCLEOTIDE SEQUENCE [GENOMIC DNA] OF 1-144</scope>
    <source>
        <strain>S1657</strain>
    </source>
</reference>
<reference key="3">
    <citation type="journal article" date="1988" name="Eur. J. Biochem.">
        <title>The Paracoccus denitrificans cytochrome aa3 has a third subunit.</title>
        <authorList>
            <person name="Haltia T."/>
            <person name="Puustinen A."/>
            <person name="Finel M."/>
        </authorList>
    </citation>
    <scope>PROTEIN SEQUENCE OF 2-16</scope>
</reference>
<reference key="4">
    <citation type="journal article" date="1995" name="Nature">
        <title>Structure at 2.8-A resolution of cytochrome c oxidase from Paracoccus denitrificans.</title>
        <authorList>
            <person name="Iwata S."/>
            <person name="Ostermeier C."/>
            <person name="Ludwig B."/>
            <person name="Michel H."/>
        </authorList>
    </citation>
    <scope>X-RAY CRYSTALLOGRAPHY (2.8 ANGSTROMS)</scope>
</reference>
<organism>
    <name type="scientific">Paracoccus denitrificans</name>
    <dbReference type="NCBI Taxonomy" id="266"/>
    <lineage>
        <taxon>Bacteria</taxon>
        <taxon>Pseudomonadati</taxon>
        <taxon>Pseudomonadota</taxon>
        <taxon>Alphaproteobacteria</taxon>
        <taxon>Rhodobacterales</taxon>
        <taxon>Paracoccaceae</taxon>
        <taxon>Paracoccus</taxon>
    </lineage>
</organism>
<accession>P06030</accession>
<evidence type="ECO:0000269" key="1">
    <source>
    </source>
</evidence>
<evidence type="ECO:0000305" key="2"/>
<evidence type="ECO:0007829" key="3">
    <source>
        <dbReference type="PDB" id="1QLE"/>
    </source>
</evidence>
<evidence type="ECO:0007829" key="4">
    <source>
        <dbReference type="PDB" id="7ATE"/>
    </source>
</evidence>
<evidence type="ECO:0007829" key="5">
    <source>
        <dbReference type="PDB" id="7ATN"/>
    </source>
</evidence>